<reference key="1">
    <citation type="journal article" date="2006" name="Nature">
        <title>DNA sequence of human chromosome 17 and analysis of rearrangement in the human lineage.</title>
        <authorList>
            <person name="Zody M.C."/>
            <person name="Garber M."/>
            <person name="Adams D.J."/>
            <person name="Sharpe T."/>
            <person name="Harrow J."/>
            <person name="Lupski J.R."/>
            <person name="Nicholson C."/>
            <person name="Searle S.M."/>
            <person name="Wilming L."/>
            <person name="Young S.K."/>
            <person name="Abouelleil A."/>
            <person name="Allen N.R."/>
            <person name="Bi W."/>
            <person name="Bloom T."/>
            <person name="Borowsky M.L."/>
            <person name="Bugalter B.E."/>
            <person name="Butler J."/>
            <person name="Chang J.L."/>
            <person name="Chen C.-K."/>
            <person name="Cook A."/>
            <person name="Corum B."/>
            <person name="Cuomo C.A."/>
            <person name="de Jong P.J."/>
            <person name="DeCaprio D."/>
            <person name="Dewar K."/>
            <person name="FitzGerald M."/>
            <person name="Gilbert J."/>
            <person name="Gibson R."/>
            <person name="Gnerre S."/>
            <person name="Goldstein S."/>
            <person name="Grafham D.V."/>
            <person name="Grocock R."/>
            <person name="Hafez N."/>
            <person name="Hagopian D.S."/>
            <person name="Hart E."/>
            <person name="Norman C.H."/>
            <person name="Humphray S."/>
            <person name="Jaffe D.B."/>
            <person name="Jones M."/>
            <person name="Kamal M."/>
            <person name="Khodiyar V.K."/>
            <person name="LaButti K."/>
            <person name="Laird G."/>
            <person name="Lehoczky J."/>
            <person name="Liu X."/>
            <person name="Lokyitsang T."/>
            <person name="Loveland J."/>
            <person name="Lui A."/>
            <person name="Macdonald P."/>
            <person name="Major J.E."/>
            <person name="Matthews L."/>
            <person name="Mauceli E."/>
            <person name="McCarroll S.A."/>
            <person name="Mihalev A.H."/>
            <person name="Mudge J."/>
            <person name="Nguyen C."/>
            <person name="Nicol R."/>
            <person name="O'Leary S.B."/>
            <person name="Osoegawa K."/>
            <person name="Schwartz D.C."/>
            <person name="Shaw-Smith C."/>
            <person name="Stankiewicz P."/>
            <person name="Steward C."/>
            <person name="Swarbreck D."/>
            <person name="Venkataraman V."/>
            <person name="Whittaker C.A."/>
            <person name="Yang X."/>
            <person name="Zimmer A.R."/>
            <person name="Bradley A."/>
            <person name="Hubbard T."/>
            <person name="Birren B.W."/>
            <person name="Rogers J."/>
            <person name="Lander E.S."/>
            <person name="Nusbaum C."/>
        </authorList>
    </citation>
    <scope>NUCLEOTIDE SEQUENCE [LARGE SCALE GENOMIC DNA]</scope>
</reference>
<reference key="2">
    <citation type="journal article" date="2004" name="Genome Res.">
        <title>The status, quality, and expansion of the NIH full-length cDNA project: the Mammalian Gene Collection (MGC).</title>
        <authorList>
            <consortium name="The MGC Project Team"/>
        </authorList>
    </citation>
    <scope>NUCLEOTIDE SEQUENCE [LARGE SCALE MRNA]</scope>
</reference>
<reference key="3">
    <citation type="journal article" date="2000" name="Genomics">
        <title>Sequence, structure, and evolution of a complete human olfactory receptor gene cluster.</title>
        <authorList>
            <person name="Glusman G."/>
            <person name="Sosinsky A."/>
            <person name="Ben-Asher E."/>
            <person name="Avidan N."/>
            <person name="Sonkin D."/>
            <person name="Bahar A."/>
            <person name="Rosenthal A."/>
            <person name="Clifton S."/>
            <person name="Roe B."/>
            <person name="Ferraz C."/>
            <person name="Demaille J.G."/>
            <person name="Lancet D."/>
        </authorList>
    </citation>
    <scope>NUCLEOTIDE SEQUENCE [GENOMIC DNA] OF 7-321</scope>
</reference>
<reference key="4">
    <citation type="journal article" date="1994" name="Hum. Mol. Genet.">
        <title>Olfactory receptor gene cluster on human chromosome 17: possible duplication of an ancestral receptor repertoire.</title>
        <authorList>
            <person name="Ben-Arie N."/>
            <person name="Lancet D."/>
            <person name="Taylor C."/>
            <person name="Khen M."/>
            <person name="Walker N."/>
            <person name="Ledbetter D.H."/>
            <person name="Carrozzo R."/>
            <person name="Patel K."/>
            <person name="Sheer D."/>
            <person name="Lehrach H."/>
            <person name="North M.A."/>
        </authorList>
    </citation>
    <scope>NUCLEOTIDE SEQUENCE [GENOMIC DNA] OF 71-321</scope>
</reference>
<reference key="5">
    <citation type="journal article" date="2004" name="Proc. Natl. Acad. Sci. U.S.A.">
        <title>The human olfactory receptor gene family.</title>
        <authorList>
            <person name="Malnic B."/>
            <person name="Godfrey P.A."/>
            <person name="Buck L.B."/>
        </authorList>
    </citation>
    <scope>IDENTIFICATION</scope>
</reference>
<reference key="6">
    <citation type="journal article" date="2004" name="Proc. Natl. Acad. Sci. U.S.A.">
        <authorList>
            <person name="Malnic B."/>
            <person name="Godfrey P.A."/>
            <person name="Buck L.B."/>
        </authorList>
    </citation>
    <scope>ERRATUM OF PUBMED:14983052</scope>
</reference>
<organism>
    <name type="scientific">Homo sapiens</name>
    <name type="common">Human</name>
    <dbReference type="NCBI Taxonomy" id="9606"/>
    <lineage>
        <taxon>Eukaryota</taxon>
        <taxon>Metazoa</taxon>
        <taxon>Chordata</taxon>
        <taxon>Craniata</taxon>
        <taxon>Vertebrata</taxon>
        <taxon>Euteleostomi</taxon>
        <taxon>Mammalia</taxon>
        <taxon>Eutheria</taxon>
        <taxon>Euarchontoglires</taxon>
        <taxon>Primates</taxon>
        <taxon>Haplorrhini</taxon>
        <taxon>Catarrhini</taxon>
        <taxon>Hominidae</taxon>
        <taxon>Homo</taxon>
    </lineage>
</organism>
<feature type="chain" id="PRO_0000150518" description="Olfactory receptor 3A2">
    <location>
        <begin position="1"/>
        <end position="321"/>
    </location>
</feature>
<feature type="topological domain" description="Extracellular" evidence="1">
    <location>
        <begin position="1"/>
        <end position="35"/>
    </location>
</feature>
<feature type="transmembrane region" description="Helical; Name=1" evidence="1">
    <location>
        <begin position="36"/>
        <end position="58"/>
    </location>
</feature>
<feature type="topological domain" description="Cytoplasmic" evidence="1">
    <location>
        <begin position="59"/>
        <end position="66"/>
    </location>
</feature>
<feature type="transmembrane region" description="Helical; Name=2" evidence="1">
    <location>
        <begin position="67"/>
        <end position="88"/>
    </location>
</feature>
<feature type="topological domain" description="Extracellular" evidence="1">
    <location>
        <begin position="89"/>
        <end position="109"/>
    </location>
</feature>
<feature type="transmembrane region" description="Helical; Name=3" evidence="1">
    <location>
        <begin position="110"/>
        <end position="129"/>
    </location>
</feature>
<feature type="topological domain" description="Cytoplasmic" evidence="1">
    <location>
        <begin position="130"/>
        <end position="149"/>
    </location>
</feature>
<feature type="transmembrane region" description="Helical; Name=4" evidence="1">
    <location>
        <begin position="150"/>
        <end position="167"/>
    </location>
</feature>
<feature type="topological domain" description="Extracellular" evidence="1">
    <location>
        <begin position="168"/>
        <end position="205"/>
    </location>
</feature>
<feature type="transmembrane region" description="Helical; Name=5" evidence="1">
    <location>
        <begin position="206"/>
        <end position="229"/>
    </location>
</feature>
<feature type="topological domain" description="Cytoplasmic" evidence="1">
    <location>
        <begin position="230"/>
        <end position="246"/>
    </location>
</feature>
<feature type="transmembrane region" description="Helical; Name=6" evidence="1">
    <location>
        <begin position="247"/>
        <end position="270"/>
    </location>
</feature>
<feature type="topological domain" description="Extracellular" evidence="1">
    <location>
        <begin position="271"/>
        <end position="281"/>
    </location>
</feature>
<feature type="transmembrane region" description="Helical; Name=7" evidence="1">
    <location>
        <begin position="282"/>
        <end position="301"/>
    </location>
</feature>
<feature type="topological domain" description="Cytoplasmic" evidence="1">
    <location>
        <begin position="302"/>
        <end position="321"/>
    </location>
</feature>
<feature type="glycosylation site" description="N-linked (GlcNAc...) asparagine" evidence="1">
    <location>
        <position position="14"/>
    </location>
</feature>
<feature type="disulfide bond" evidence="2">
    <location>
        <begin position="106"/>
        <end position="198"/>
    </location>
</feature>
<feature type="sequence variant" id="VAR_062032" description="In dbSNP:rs9901356.">
    <original>L</original>
    <variation>V</variation>
    <location>
        <position position="190"/>
    </location>
</feature>
<feature type="sequence conflict" description="In Ref. 4; AAA17448." evidence="3" ref="4">
    <original>A</original>
    <variation>G</variation>
    <location>
        <position position="128"/>
    </location>
</feature>
<feature type="sequence conflict" description="In Ref. 4; AAA17448." evidence="3" ref="4">
    <original>A</original>
    <variation>G</variation>
    <location>
        <position position="134"/>
    </location>
</feature>
<feature type="sequence conflict" description="In Ref. 4; AAA17448." evidence="3" ref="4">
    <original>S</original>
    <variation>R</variation>
    <location>
        <position position="142"/>
    </location>
</feature>
<feature type="sequence conflict" description="In Ref. 4; AAA17448." evidence="3" ref="4">
    <original>A</original>
    <variation>G</variation>
    <location>
        <position position="171"/>
    </location>
</feature>
<proteinExistence type="evidence at transcript level"/>
<keyword id="KW-1003">Cell membrane</keyword>
<keyword id="KW-1015">Disulfide bond</keyword>
<keyword id="KW-0297">G-protein coupled receptor</keyword>
<keyword id="KW-0325">Glycoprotein</keyword>
<keyword id="KW-0472">Membrane</keyword>
<keyword id="KW-0552">Olfaction</keyword>
<keyword id="KW-0675">Receptor</keyword>
<keyword id="KW-1185">Reference proteome</keyword>
<keyword id="KW-0716">Sensory transduction</keyword>
<keyword id="KW-0807">Transducer</keyword>
<keyword id="KW-0812">Transmembrane</keyword>
<keyword id="KW-1133">Transmembrane helix</keyword>
<dbReference type="EMBL" id="AC087498">
    <property type="status" value="NOT_ANNOTATED_CDS"/>
    <property type="molecule type" value="Genomic_DNA"/>
</dbReference>
<dbReference type="EMBL" id="BC095517">
    <property type="protein sequence ID" value="AAH95517.1"/>
    <property type="molecule type" value="mRNA"/>
</dbReference>
<dbReference type="EMBL" id="AF087930">
    <property type="protein sequence ID" value="AAF37318.1"/>
    <property type="molecule type" value="Genomic_DNA"/>
</dbReference>
<dbReference type="EMBL" id="U04713">
    <property type="protein sequence ID" value="AAA17448.1"/>
    <property type="molecule type" value="Genomic_DNA"/>
</dbReference>
<dbReference type="EMBL" id="BK004239">
    <property type="protein sequence ID" value="DAA04637.1"/>
    <property type="molecule type" value="Genomic_DNA"/>
</dbReference>
<dbReference type="PIR" id="I38484">
    <property type="entry name" value="I38484"/>
</dbReference>
<dbReference type="RefSeq" id="NP_002542.3">
    <property type="nucleotide sequence ID" value="NM_002551.3"/>
</dbReference>
<dbReference type="SMR" id="P47893"/>
<dbReference type="BioGRID" id="111039">
    <property type="interactions" value="2"/>
</dbReference>
<dbReference type="FunCoup" id="P47893">
    <property type="interactions" value="442"/>
</dbReference>
<dbReference type="IntAct" id="P47893">
    <property type="interactions" value="1"/>
</dbReference>
<dbReference type="STRING" id="9606.ENSP00000386180"/>
<dbReference type="GlyCosmos" id="P47893">
    <property type="glycosylation" value="1 site, No reported glycans"/>
</dbReference>
<dbReference type="GlyGen" id="P47893">
    <property type="glycosylation" value="1 site"/>
</dbReference>
<dbReference type="iPTMnet" id="P47893"/>
<dbReference type="PhosphoSitePlus" id="P47893"/>
<dbReference type="BioMuta" id="OR3A2"/>
<dbReference type="DMDM" id="226694173"/>
<dbReference type="MassIVE" id="P47893"/>
<dbReference type="PaxDb" id="9606-ENSP00000386180"/>
<dbReference type="Antibodypedia" id="62122">
    <property type="antibodies" value="56 antibodies from 17 providers"/>
</dbReference>
<dbReference type="DNASU" id="4995"/>
<dbReference type="GeneID" id="4995"/>
<dbReference type="KEGG" id="hsa:4995"/>
<dbReference type="UCSC" id="uc002fvg.4">
    <property type="organism name" value="human"/>
</dbReference>
<dbReference type="AGR" id="HGNC:8283"/>
<dbReference type="CTD" id="4995"/>
<dbReference type="DisGeNET" id="4995"/>
<dbReference type="GeneCards" id="OR3A2"/>
<dbReference type="HGNC" id="HGNC:8283">
    <property type="gene designation" value="OR3A2"/>
</dbReference>
<dbReference type="neXtProt" id="NX_P47893"/>
<dbReference type="PharmGKB" id="PA32224"/>
<dbReference type="VEuPathDB" id="HostDB:ENSG00000221882"/>
<dbReference type="eggNOG" id="ENOG502RU1B">
    <property type="taxonomic scope" value="Eukaryota"/>
</dbReference>
<dbReference type="HOGENOM" id="CLU_012526_5_5_1"/>
<dbReference type="InParanoid" id="P47893"/>
<dbReference type="OrthoDB" id="9827787at2759"/>
<dbReference type="PAN-GO" id="P47893">
    <property type="GO annotations" value="3 GO annotations based on evolutionary models"/>
</dbReference>
<dbReference type="PhylomeDB" id="P47893"/>
<dbReference type="TreeFam" id="TF352732"/>
<dbReference type="PathwayCommons" id="P47893"/>
<dbReference type="Reactome" id="R-HSA-9752946">
    <property type="pathway name" value="Expression and translocation of olfactory receptors"/>
</dbReference>
<dbReference type="SignaLink" id="P47893"/>
<dbReference type="BioGRID-ORCS" id="4995">
    <property type="hits" value="13 hits in 712 CRISPR screens"/>
</dbReference>
<dbReference type="ChiTaRS" id="OR3A2">
    <property type="organism name" value="human"/>
</dbReference>
<dbReference type="GeneWiki" id="OR3A2"/>
<dbReference type="GenomeRNAi" id="4995"/>
<dbReference type="Pharos" id="P47893">
    <property type="development level" value="Tdark"/>
</dbReference>
<dbReference type="PRO" id="PR:P47893"/>
<dbReference type="Proteomes" id="UP000005640">
    <property type="component" value="Chromosome 17"/>
</dbReference>
<dbReference type="RNAct" id="P47893">
    <property type="molecule type" value="protein"/>
</dbReference>
<dbReference type="GO" id="GO:0005886">
    <property type="term" value="C:plasma membrane"/>
    <property type="evidence" value="ECO:0000318"/>
    <property type="project" value="GO_Central"/>
</dbReference>
<dbReference type="GO" id="GO:0004930">
    <property type="term" value="F:G protein-coupled receptor activity"/>
    <property type="evidence" value="ECO:0007669"/>
    <property type="project" value="UniProtKB-KW"/>
</dbReference>
<dbReference type="GO" id="GO:0004984">
    <property type="term" value="F:olfactory receptor activity"/>
    <property type="evidence" value="ECO:0000318"/>
    <property type="project" value="GO_Central"/>
</dbReference>
<dbReference type="GO" id="GO:0038023">
    <property type="term" value="F:signaling receptor activity"/>
    <property type="evidence" value="ECO:0000304"/>
    <property type="project" value="ProtInc"/>
</dbReference>
<dbReference type="GO" id="GO:0007606">
    <property type="term" value="P:sensory perception of chemical stimulus"/>
    <property type="evidence" value="ECO:0000304"/>
    <property type="project" value="ProtInc"/>
</dbReference>
<dbReference type="GO" id="GO:0007165">
    <property type="term" value="P:signal transduction"/>
    <property type="evidence" value="ECO:0000318"/>
    <property type="project" value="GO_Central"/>
</dbReference>
<dbReference type="CDD" id="cd15233">
    <property type="entry name" value="7tmA_OR3A-like"/>
    <property type="match status" value="1"/>
</dbReference>
<dbReference type="FunFam" id="1.20.1070.10:FF:000010">
    <property type="entry name" value="Olfactory receptor"/>
    <property type="match status" value="1"/>
</dbReference>
<dbReference type="Gene3D" id="1.20.1070.10">
    <property type="entry name" value="Rhodopsin 7-helix transmembrane proteins"/>
    <property type="match status" value="1"/>
</dbReference>
<dbReference type="InterPro" id="IPR000276">
    <property type="entry name" value="GPCR_Rhodpsn"/>
</dbReference>
<dbReference type="InterPro" id="IPR017452">
    <property type="entry name" value="GPCR_Rhodpsn_7TM"/>
</dbReference>
<dbReference type="InterPro" id="IPR000725">
    <property type="entry name" value="Olfact_rcpt"/>
</dbReference>
<dbReference type="PANTHER" id="PTHR48001">
    <property type="entry name" value="OLFACTORY RECEPTOR"/>
    <property type="match status" value="1"/>
</dbReference>
<dbReference type="Pfam" id="PF13853">
    <property type="entry name" value="7tm_4"/>
    <property type="match status" value="1"/>
</dbReference>
<dbReference type="PRINTS" id="PR00237">
    <property type="entry name" value="GPCRRHODOPSN"/>
</dbReference>
<dbReference type="PRINTS" id="PR00245">
    <property type="entry name" value="OLFACTORYR"/>
</dbReference>
<dbReference type="SUPFAM" id="SSF81321">
    <property type="entry name" value="Family A G protein-coupled receptor-like"/>
    <property type="match status" value="1"/>
</dbReference>
<dbReference type="PROSITE" id="PS50262">
    <property type="entry name" value="G_PROTEIN_RECEP_F1_2"/>
    <property type="match status" value="1"/>
</dbReference>
<comment type="function">
    <text evidence="3">Odorant receptor.</text>
</comment>
<comment type="subcellular location">
    <subcellularLocation>
        <location>Cell membrane</location>
        <topology>Multi-pass membrane protein</topology>
    </subcellularLocation>
</comment>
<comment type="similarity">
    <text evidence="2">Belongs to the G-protein coupled receptor 1 family.</text>
</comment>
<comment type="caution">
    <text evidence="3">It is uncertain whether Met-1 or Met-7 is the initiator.</text>
</comment>
<comment type="online information" name="Human Olfactory Receptor Data Exploratorium (HORDE)">
    <link uri="http://genome.weizmann.ac.il/horde/card/index/symbol:OR3A2"/>
</comment>
<sequence length="321" mass="35207">MSLQKLMEPEAGTNRTAVAEFILLGLVQTEEMQPVVFVLLLFAYLVTTGGNLSILAAVLVEPKLHAPMYFFLGNLSVLDVGCITVTVPAMLGRLLSHKSTISYDACLSQLFFFHLLAGMDCFLLTAMAYDRLLAICQPLTYSTRMSQTVQRMLVAASLACAFTNALTHTVAMSTLNFCGPNEVNHFYCDLPQLFQLSCSSTQLNELLLFAVGFIMAGTPLVLIITAYSHVAAAVLRIRSVEGRKKAFSTCGSHLTVVCLFFGRGIFNYMRLGSEEASDKDKGVGVFNTVINPMLNPLIYSLRNPDVQGALWQIFLGRRSLT</sequence>
<evidence type="ECO:0000255" key="1"/>
<evidence type="ECO:0000255" key="2">
    <source>
        <dbReference type="PROSITE-ProRule" id="PRU00521"/>
    </source>
</evidence>
<evidence type="ECO:0000305" key="3"/>
<name>OR3A2_HUMAN</name>
<accession>P47893</accession>
<accession>Q6IFM3</accession>
<accession>Q9P1Q3</accession>
<protein>
    <recommendedName>
        <fullName>Olfactory receptor 3A2</fullName>
    </recommendedName>
    <alternativeName>
        <fullName>Olfactory receptor 17-228</fullName>
        <shortName>OR17-228</shortName>
    </alternativeName>
    <alternativeName>
        <fullName>Olfactory receptor OR17-14</fullName>
    </alternativeName>
</protein>
<gene>
    <name type="primary">OR3A2</name>
    <name type="synonym">OLFRA04</name>
</gene>